<proteinExistence type="inferred from homology"/>
<accession>B4U8J0</accession>
<feature type="chain" id="PRO_0000391166" description="NADH-quinone oxidoreductase subunit N 2">
    <location>
        <begin position="1"/>
        <end position="464"/>
    </location>
</feature>
<feature type="transmembrane region" description="Helical" evidence="1">
    <location>
        <begin position="12"/>
        <end position="32"/>
    </location>
</feature>
<feature type="transmembrane region" description="Helical" evidence="1">
    <location>
        <begin position="33"/>
        <end position="53"/>
    </location>
</feature>
<feature type="transmembrane region" description="Helical" evidence="1">
    <location>
        <begin position="62"/>
        <end position="82"/>
    </location>
</feature>
<feature type="transmembrane region" description="Helical" evidence="1">
    <location>
        <begin position="93"/>
        <end position="113"/>
    </location>
</feature>
<feature type="transmembrane region" description="Helical" evidence="1">
    <location>
        <begin position="117"/>
        <end position="137"/>
    </location>
</feature>
<feature type="transmembrane region" description="Helical" evidence="1">
    <location>
        <begin position="152"/>
        <end position="172"/>
    </location>
</feature>
<feature type="transmembrane region" description="Helical" evidence="1">
    <location>
        <begin position="189"/>
        <end position="209"/>
    </location>
</feature>
<feature type="transmembrane region" description="Helical" evidence="1">
    <location>
        <begin position="227"/>
        <end position="247"/>
    </location>
</feature>
<feature type="transmembrane region" description="Helical" evidence="1">
    <location>
        <begin position="254"/>
        <end position="274"/>
    </location>
</feature>
<feature type="transmembrane region" description="Helical" evidence="1">
    <location>
        <begin position="282"/>
        <end position="304"/>
    </location>
</feature>
<feature type="transmembrane region" description="Helical" evidence="1">
    <location>
        <begin position="310"/>
        <end position="330"/>
    </location>
</feature>
<feature type="transmembrane region" description="Helical" evidence="1">
    <location>
        <begin position="351"/>
        <end position="371"/>
    </location>
</feature>
<feature type="transmembrane region" description="Helical" evidence="1">
    <location>
        <begin position="400"/>
        <end position="420"/>
    </location>
</feature>
<feature type="transmembrane region" description="Helical" evidence="1">
    <location>
        <begin position="434"/>
        <end position="454"/>
    </location>
</feature>
<reference key="1">
    <citation type="journal article" date="2009" name="J. Bacteriol.">
        <title>Complete and draft genome sequences of six members of the Aquificales.</title>
        <authorList>
            <person name="Reysenbach A.-L."/>
            <person name="Hamamura N."/>
            <person name="Podar M."/>
            <person name="Griffiths E."/>
            <person name="Ferreira S."/>
            <person name="Hochstein R."/>
            <person name="Heidelberg J."/>
            <person name="Johnson J."/>
            <person name="Mead D."/>
            <person name="Pohorille A."/>
            <person name="Sarmiento M."/>
            <person name="Schweighofer K."/>
            <person name="Seshadri R."/>
            <person name="Voytek M.A."/>
        </authorList>
    </citation>
    <scope>NUCLEOTIDE SEQUENCE [LARGE SCALE GENOMIC DNA]</scope>
    <source>
        <strain>Y04AAS1</strain>
    </source>
</reference>
<sequence length="464" mass="51316">MKALYPDIITTVGIIFLIILELFLPSFDLIGFLGFLISFISGVLAIKYSLAGYRFNEWLLDINAFSLLLKGVMYILTSFVIFSSVSFFKSKKTFVENVYTFLLISLGLSIMVSSKNLAVILAGLELASISMYISVGMLRDDYISKEASFKYLVLGSMTTAFFGIGSAFYIGATSHLDIISVSVNHNTAFALASLFLFVAFALKVSAAPFHFWTPDAYEGAPTSNTAFISTVPKIGFYAVLFLLASYIFPVTNNFSYIVGIVGVISMFWGNLVAYAQNSAKRMLAYSSIGHAGYFLIGFSRYNPLSVSSTIFYVIVYAFATAGAFLVLSILEKNQSWTHDMSNYRALYKRSPFLATALALFLFALIGIPPFATFVGKLGIFLGLVNSNAWFFAILFVIGSIIAAGYYLKLIVYMFFKEPATKDNMSLSLNLFDTIGISAFLIIVFFFGIFPNILFDIILKDMFHG</sequence>
<name>NUON2_HYDS0</name>
<dbReference type="EC" id="7.1.1.-" evidence="1"/>
<dbReference type="EMBL" id="CP001130">
    <property type="protein sequence ID" value="ACG57451.1"/>
    <property type="molecule type" value="Genomic_DNA"/>
</dbReference>
<dbReference type="RefSeq" id="WP_012513807.1">
    <property type="nucleotide sequence ID" value="NC_011126.1"/>
</dbReference>
<dbReference type="SMR" id="B4U8J0"/>
<dbReference type="STRING" id="380749.HY04AAS1_0764"/>
<dbReference type="KEGG" id="hya:HY04AAS1_0764"/>
<dbReference type="eggNOG" id="COG1007">
    <property type="taxonomic scope" value="Bacteria"/>
</dbReference>
<dbReference type="HOGENOM" id="CLU_007100_1_4_0"/>
<dbReference type="OrthoDB" id="9807568at2"/>
<dbReference type="GO" id="GO:0005886">
    <property type="term" value="C:plasma membrane"/>
    <property type="evidence" value="ECO:0007669"/>
    <property type="project" value="UniProtKB-SubCell"/>
</dbReference>
<dbReference type="GO" id="GO:0008137">
    <property type="term" value="F:NADH dehydrogenase (ubiquinone) activity"/>
    <property type="evidence" value="ECO:0007669"/>
    <property type="project" value="InterPro"/>
</dbReference>
<dbReference type="GO" id="GO:0050136">
    <property type="term" value="F:NADH:ubiquinone reductase (non-electrogenic) activity"/>
    <property type="evidence" value="ECO:0007669"/>
    <property type="project" value="UniProtKB-UniRule"/>
</dbReference>
<dbReference type="GO" id="GO:0048038">
    <property type="term" value="F:quinone binding"/>
    <property type="evidence" value="ECO:0007669"/>
    <property type="project" value="UniProtKB-KW"/>
</dbReference>
<dbReference type="GO" id="GO:0042773">
    <property type="term" value="P:ATP synthesis coupled electron transport"/>
    <property type="evidence" value="ECO:0007669"/>
    <property type="project" value="InterPro"/>
</dbReference>
<dbReference type="HAMAP" id="MF_00445">
    <property type="entry name" value="NDH1_NuoN_1"/>
    <property type="match status" value="1"/>
</dbReference>
<dbReference type="InterPro" id="IPR010096">
    <property type="entry name" value="NADH-Q_OxRdtase_suN/2"/>
</dbReference>
<dbReference type="InterPro" id="IPR001750">
    <property type="entry name" value="ND/Mrp_TM"/>
</dbReference>
<dbReference type="NCBIfam" id="TIGR01770">
    <property type="entry name" value="NDH_I_N"/>
    <property type="match status" value="1"/>
</dbReference>
<dbReference type="PANTHER" id="PTHR22773">
    <property type="entry name" value="NADH DEHYDROGENASE"/>
    <property type="match status" value="1"/>
</dbReference>
<dbReference type="Pfam" id="PF00361">
    <property type="entry name" value="Proton_antipo_M"/>
    <property type="match status" value="1"/>
</dbReference>
<gene>
    <name evidence="1" type="primary">nuoN2</name>
    <name type="ordered locus">HY04AAS1_0764</name>
</gene>
<comment type="function">
    <text evidence="1">NDH-1 shuttles electrons from NADH, via FMN and iron-sulfur (Fe-S) centers, to quinones in the respiratory chain. The immediate electron acceptor for the enzyme in this species is believed to be ubiquinone. Couples the redox reaction to proton translocation (for every two electrons transferred, four hydrogen ions are translocated across the cytoplasmic membrane), and thus conserves the redox energy in a proton gradient.</text>
</comment>
<comment type="catalytic activity">
    <reaction evidence="1">
        <text>a quinone + NADH + 5 H(+)(in) = a quinol + NAD(+) + 4 H(+)(out)</text>
        <dbReference type="Rhea" id="RHEA:57888"/>
        <dbReference type="ChEBI" id="CHEBI:15378"/>
        <dbReference type="ChEBI" id="CHEBI:24646"/>
        <dbReference type="ChEBI" id="CHEBI:57540"/>
        <dbReference type="ChEBI" id="CHEBI:57945"/>
        <dbReference type="ChEBI" id="CHEBI:132124"/>
    </reaction>
</comment>
<comment type="subunit">
    <text evidence="1">NDH-1 is composed of 14 different subunits. Subunits NuoA, H, J, K, L, M, N constitute the membrane sector of the complex.</text>
</comment>
<comment type="subcellular location">
    <subcellularLocation>
        <location evidence="1">Cell inner membrane</location>
        <topology evidence="1">Multi-pass membrane protein</topology>
    </subcellularLocation>
</comment>
<comment type="similarity">
    <text evidence="1">Belongs to the complex I subunit 2 family.</text>
</comment>
<organism>
    <name type="scientific">Hydrogenobaculum sp. (strain Y04AAS1)</name>
    <dbReference type="NCBI Taxonomy" id="380749"/>
    <lineage>
        <taxon>Bacteria</taxon>
        <taxon>Pseudomonadati</taxon>
        <taxon>Aquificota</taxon>
        <taxon>Aquificia</taxon>
        <taxon>Aquificales</taxon>
        <taxon>Aquificaceae</taxon>
        <taxon>Hydrogenobaculum</taxon>
    </lineage>
</organism>
<evidence type="ECO:0000255" key="1">
    <source>
        <dbReference type="HAMAP-Rule" id="MF_00445"/>
    </source>
</evidence>
<keyword id="KW-0997">Cell inner membrane</keyword>
<keyword id="KW-1003">Cell membrane</keyword>
<keyword id="KW-0472">Membrane</keyword>
<keyword id="KW-0520">NAD</keyword>
<keyword id="KW-0874">Quinone</keyword>
<keyword id="KW-1278">Translocase</keyword>
<keyword id="KW-0812">Transmembrane</keyword>
<keyword id="KW-1133">Transmembrane helix</keyword>
<keyword id="KW-0813">Transport</keyword>
<keyword id="KW-0830">Ubiquinone</keyword>
<protein>
    <recommendedName>
        <fullName evidence="1">NADH-quinone oxidoreductase subunit N 2</fullName>
        <ecNumber evidence="1">7.1.1.-</ecNumber>
    </recommendedName>
    <alternativeName>
        <fullName evidence="1">NADH dehydrogenase I subunit N 2</fullName>
    </alternativeName>
    <alternativeName>
        <fullName evidence="1">NDH-1 subunit N 2</fullName>
    </alternativeName>
</protein>